<keyword id="KW-0963">Cytoplasm</keyword>
<keyword id="KW-0413">Isomerase</keyword>
<keyword id="KW-0464">Manganese</keyword>
<keyword id="KW-0479">Metal-binding</keyword>
<keyword id="KW-0684">Rhamnose metabolism</keyword>
<proteinExistence type="inferred from homology"/>
<gene>
    <name evidence="1" type="primary">rhaA</name>
    <name type="ordered locus">KPN78578_41670</name>
    <name type="ORF">KPN_04212</name>
</gene>
<name>RHAA_KLEP7</name>
<comment type="function">
    <text evidence="1">Catalyzes the interconversion of L-rhamnose and L-rhamnulose.</text>
</comment>
<comment type="catalytic activity">
    <reaction evidence="1">
        <text>L-rhamnopyranose = L-rhamnulose</text>
        <dbReference type="Rhea" id="RHEA:23160"/>
        <dbReference type="ChEBI" id="CHEBI:17897"/>
        <dbReference type="ChEBI" id="CHEBI:62346"/>
        <dbReference type="EC" id="5.3.1.14"/>
    </reaction>
</comment>
<comment type="cofactor">
    <cofactor evidence="1">
        <name>Mn(2+)</name>
        <dbReference type="ChEBI" id="CHEBI:29035"/>
    </cofactor>
    <text evidence="1">Binds 1 Mn(2+) ion per subunit.</text>
</comment>
<comment type="pathway">
    <text evidence="1">Carbohydrate degradation; L-rhamnose degradation; glycerone phosphate from L-rhamnose: step 1/3.</text>
</comment>
<comment type="subunit">
    <text evidence="1">Homotetramer.</text>
</comment>
<comment type="subcellular location">
    <subcellularLocation>
        <location evidence="1">Cytoplasm</location>
    </subcellularLocation>
</comment>
<comment type="similarity">
    <text evidence="1">Belongs to the rhamnose isomerase family.</text>
</comment>
<sequence>MTTQLEQAWEIAKQRYAAVGVDVEEALRQLDRLPVSMHCWQGDDVAGFENPAGSLTGGIQATGNYPGKARNAEELRADLEQALSLIPGPKRLNLHAIYLESDAPVARNEIKPEHFKNWVTWAKANKLGLDFNPSCFSHPLSADGFTLSHANDEIRQFWIDHCKASRRVSAYFGEQLGTPSVMNIWVPDGMKDITVDRFAPRQRLLNALDEVISEKLDPAHHIDAVESKLFGIGAESYTVGSNEFYMGYATSRQTALCLDAGHFHPTEVISDKISAAMLYIPRLLLHVSRPVRWDSDHVVLLDDETQAIASEIIRHNLFDRVHIGLDFFDASINRIAAWVIGTRNMKKALLRALLEPTAQLRQLENDGDYTARLALLEEQKSLPWQAIWEMYCQRHDTPAGSQWLDSVRAYENAVLSQRG</sequence>
<accession>A6TGA7</accession>
<organism>
    <name type="scientific">Klebsiella pneumoniae subsp. pneumoniae (strain ATCC 700721 / MGH 78578)</name>
    <dbReference type="NCBI Taxonomy" id="272620"/>
    <lineage>
        <taxon>Bacteria</taxon>
        <taxon>Pseudomonadati</taxon>
        <taxon>Pseudomonadota</taxon>
        <taxon>Gammaproteobacteria</taxon>
        <taxon>Enterobacterales</taxon>
        <taxon>Enterobacteriaceae</taxon>
        <taxon>Klebsiella/Raoultella group</taxon>
        <taxon>Klebsiella</taxon>
        <taxon>Klebsiella pneumoniae complex</taxon>
    </lineage>
</organism>
<dbReference type="EC" id="5.3.1.14" evidence="1"/>
<dbReference type="EMBL" id="CP000647">
    <property type="protein sequence ID" value="ABR79591.1"/>
    <property type="molecule type" value="Genomic_DNA"/>
</dbReference>
<dbReference type="RefSeq" id="WP_004150375.1">
    <property type="nucleotide sequence ID" value="NC_009648.1"/>
</dbReference>
<dbReference type="SMR" id="A6TGA7"/>
<dbReference type="STRING" id="272620.KPN_04212"/>
<dbReference type="PaxDb" id="272620-KPN_04212"/>
<dbReference type="EnsemblBacteria" id="ABR79591">
    <property type="protein sequence ID" value="ABR79591"/>
    <property type="gene ID" value="KPN_04212"/>
</dbReference>
<dbReference type="KEGG" id="kpn:KPN_04212"/>
<dbReference type="HOGENOM" id="CLU_052790_0_0_6"/>
<dbReference type="UniPathway" id="UPA00541">
    <property type="reaction ID" value="UER00601"/>
</dbReference>
<dbReference type="Proteomes" id="UP000000265">
    <property type="component" value="Chromosome"/>
</dbReference>
<dbReference type="GO" id="GO:0005737">
    <property type="term" value="C:cytoplasm"/>
    <property type="evidence" value="ECO:0007669"/>
    <property type="project" value="UniProtKB-SubCell"/>
</dbReference>
<dbReference type="GO" id="GO:0008740">
    <property type="term" value="F:L-rhamnose isomerase activity"/>
    <property type="evidence" value="ECO:0007669"/>
    <property type="project" value="UniProtKB-UniRule"/>
</dbReference>
<dbReference type="GO" id="GO:0030145">
    <property type="term" value="F:manganese ion binding"/>
    <property type="evidence" value="ECO:0007669"/>
    <property type="project" value="UniProtKB-UniRule"/>
</dbReference>
<dbReference type="GO" id="GO:0019324">
    <property type="term" value="P:L-lyxose metabolic process"/>
    <property type="evidence" value="ECO:0007669"/>
    <property type="project" value="TreeGrafter"/>
</dbReference>
<dbReference type="GO" id="GO:0019301">
    <property type="term" value="P:rhamnose catabolic process"/>
    <property type="evidence" value="ECO:0007669"/>
    <property type="project" value="UniProtKB-UniRule"/>
</dbReference>
<dbReference type="FunFam" id="3.20.20.150:FF:000006">
    <property type="entry name" value="L-rhamnose isomerase"/>
    <property type="match status" value="1"/>
</dbReference>
<dbReference type="Gene3D" id="3.20.20.150">
    <property type="entry name" value="Divalent-metal-dependent TIM barrel enzymes"/>
    <property type="match status" value="1"/>
</dbReference>
<dbReference type="HAMAP" id="MF_00541">
    <property type="entry name" value="RhaA"/>
    <property type="match status" value="1"/>
</dbReference>
<dbReference type="InterPro" id="IPR050337">
    <property type="entry name" value="L-rhamnose_isomerase"/>
</dbReference>
<dbReference type="InterPro" id="IPR009308">
    <property type="entry name" value="Rhamnose_isomerase"/>
</dbReference>
<dbReference type="InterPro" id="IPR036237">
    <property type="entry name" value="Xyl_isomerase-like_sf"/>
</dbReference>
<dbReference type="NCBIfam" id="NF002203">
    <property type="entry name" value="PRK01076.1"/>
    <property type="match status" value="1"/>
</dbReference>
<dbReference type="NCBIfam" id="TIGR01748">
    <property type="entry name" value="rhaA"/>
    <property type="match status" value="1"/>
</dbReference>
<dbReference type="PANTHER" id="PTHR30268">
    <property type="entry name" value="L-RHAMNOSE ISOMERASE"/>
    <property type="match status" value="1"/>
</dbReference>
<dbReference type="PANTHER" id="PTHR30268:SF0">
    <property type="entry name" value="L-RHAMNOSE ISOMERASE"/>
    <property type="match status" value="1"/>
</dbReference>
<dbReference type="Pfam" id="PF06134">
    <property type="entry name" value="RhaA"/>
    <property type="match status" value="1"/>
</dbReference>
<dbReference type="SUPFAM" id="SSF51658">
    <property type="entry name" value="Xylose isomerase-like"/>
    <property type="match status" value="1"/>
</dbReference>
<reference key="1">
    <citation type="submission" date="2006-09" db="EMBL/GenBank/DDBJ databases">
        <authorList>
            <consortium name="The Klebsiella pneumonia Genome Sequencing Project"/>
            <person name="McClelland M."/>
            <person name="Sanderson E.K."/>
            <person name="Spieth J."/>
            <person name="Clifton W.S."/>
            <person name="Latreille P."/>
            <person name="Sabo A."/>
            <person name="Pepin K."/>
            <person name="Bhonagiri V."/>
            <person name="Porwollik S."/>
            <person name="Ali J."/>
            <person name="Wilson R.K."/>
        </authorList>
    </citation>
    <scope>NUCLEOTIDE SEQUENCE [LARGE SCALE GENOMIC DNA]</scope>
    <source>
        <strain>ATCC 700721 / MGH 78578</strain>
    </source>
</reference>
<feature type="chain" id="PRO_1000017719" description="L-rhamnose isomerase">
    <location>
        <begin position="1"/>
        <end position="419"/>
    </location>
</feature>
<feature type="binding site" evidence="1">
    <location>
        <position position="262"/>
    </location>
    <ligand>
        <name>Mn(2+)</name>
        <dbReference type="ChEBI" id="CHEBI:29035"/>
    </ligand>
</feature>
<feature type="binding site" evidence="1">
    <location>
        <position position="294"/>
    </location>
    <ligand>
        <name>Mn(2+)</name>
        <dbReference type="ChEBI" id="CHEBI:29035"/>
    </ligand>
</feature>
<feature type="binding site" evidence="1">
    <location>
        <position position="296"/>
    </location>
    <ligand>
        <name>Mn(2+)</name>
        <dbReference type="ChEBI" id="CHEBI:29035"/>
    </ligand>
</feature>
<evidence type="ECO:0000255" key="1">
    <source>
        <dbReference type="HAMAP-Rule" id="MF_00541"/>
    </source>
</evidence>
<protein>
    <recommendedName>
        <fullName evidence="1">L-rhamnose isomerase</fullName>
        <ecNumber evidence="1">5.3.1.14</ecNumber>
    </recommendedName>
</protein>